<feature type="chain" id="PRO_1000117095" description="ATP phosphoribosyltransferase">
    <location>
        <begin position="1"/>
        <end position="289"/>
    </location>
</feature>
<proteinExistence type="inferred from homology"/>
<gene>
    <name evidence="1" type="primary">hisG</name>
    <name type="ordered locus">PTH_0960</name>
</gene>
<evidence type="ECO:0000255" key="1">
    <source>
        <dbReference type="HAMAP-Rule" id="MF_00079"/>
    </source>
</evidence>
<sequence>MKLRLGLPKGSLQEATFQLFKQAGFELTVRSRSYFPSVNDPELEVVLMRAQEIPRYVHEGVLDAGLSGLDWILENEADVVEVADLVYAKSTPNPIRLVIAVANDSNIKSVSDLNGKRIATELVRVTQKFLRENGVNAYVEYSYGATEVKVPHLVDAIADITETGSSLKANNLRVIATILESTTKLHANKESWNDPWKREKLQNLAVLLQGALRARARVGLKMNVPGDRLDTILAILPAMKQPTISQLVNSDWVAVEVILEERQVRDLIPALKRAGAHDIIEYPLTKVIP</sequence>
<keyword id="KW-0028">Amino-acid biosynthesis</keyword>
<keyword id="KW-0067">ATP-binding</keyword>
<keyword id="KW-0963">Cytoplasm</keyword>
<keyword id="KW-0328">Glycosyltransferase</keyword>
<keyword id="KW-0368">Histidine biosynthesis</keyword>
<keyword id="KW-0460">Magnesium</keyword>
<keyword id="KW-0479">Metal-binding</keyword>
<keyword id="KW-0547">Nucleotide-binding</keyword>
<keyword id="KW-1185">Reference proteome</keyword>
<keyword id="KW-0808">Transferase</keyword>
<protein>
    <recommendedName>
        <fullName evidence="1">ATP phosphoribosyltransferase</fullName>
        <shortName evidence="1">ATP-PRT</shortName>
        <shortName evidence="1">ATP-PRTase</shortName>
        <ecNumber evidence="1">2.4.2.17</ecNumber>
    </recommendedName>
</protein>
<organism>
    <name type="scientific">Pelotomaculum thermopropionicum (strain DSM 13744 / JCM 10971 / SI)</name>
    <dbReference type="NCBI Taxonomy" id="370438"/>
    <lineage>
        <taxon>Bacteria</taxon>
        <taxon>Bacillati</taxon>
        <taxon>Bacillota</taxon>
        <taxon>Clostridia</taxon>
        <taxon>Eubacteriales</taxon>
        <taxon>Desulfotomaculaceae</taxon>
        <taxon>Pelotomaculum</taxon>
    </lineage>
</organism>
<dbReference type="EC" id="2.4.2.17" evidence="1"/>
<dbReference type="EMBL" id="AP009389">
    <property type="protein sequence ID" value="BAF59141.1"/>
    <property type="molecule type" value="Genomic_DNA"/>
</dbReference>
<dbReference type="SMR" id="A5D3N6"/>
<dbReference type="STRING" id="370438.PTH_0960"/>
<dbReference type="KEGG" id="pth:PTH_0960"/>
<dbReference type="eggNOG" id="COG0040">
    <property type="taxonomic scope" value="Bacteria"/>
</dbReference>
<dbReference type="HOGENOM" id="CLU_038115_1_1_9"/>
<dbReference type="UniPathway" id="UPA00031">
    <property type="reaction ID" value="UER00006"/>
</dbReference>
<dbReference type="Proteomes" id="UP000006556">
    <property type="component" value="Chromosome"/>
</dbReference>
<dbReference type="GO" id="GO:0005737">
    <property type="term" value="C:cytoplasm"/>
    <property type="evidence" value="ECO:0007669"/>
    <property type="project" value="UniProtKB-SubCell"/>
</dbReference>
<dbReference type="GO" id="GO:0005524">
    <property type="term" value="F:ATP binding"/>
    <property type="evidence" value="ECO:0007669"/>
    <property type="project" value="UniProtKB-KW"/>
</dbReference>
<dbReference type="GO" id="GO:0003879">
    <property type="term" value="F:ATP phosphoribosyltransferase activity"/>
    <property type="evidence" value="ECO:0007669"/>
    <property type="project" value="UniProtKB-UniRule"/>
</dbReference>
<dbReference type="GO" id="GO:0000287">
    <property type="term" value="F:magnesium ion binding"/>
    <property type="evidence" value="ECO:0007669"/>
    <property type="project" value="UniProtKB-UniRule"/>
</dbReference>
<dbReference type="GO" id="GO:0000105">
    <property type="term" value="P:L-histidine biosynthetic process"/>
    <property type="evidence" value="ECO:0007669"/>
    <property type="project" value="UniProtKB-UniRule"/>
</dbReference>
<dbReference type="CDD" id="cd13593">
    <property type="entry name" value="PBP2_HisGL3"/>
    <property type="match status" value="1"/>
</dbReference>
<dbReference type="FunFam" id="3.30.70.120:FF:000002">
    <property type="entry name" value="ATP phosphoribosyltransferase"/>
    <property type="match status" value="1"/>
</dbReference>
<dbReference type="Gene3D" id="3.30.70.120">
    <property type="match status" value="1"/>
</dbReference>
<dbReference type="Gene3D" id="3.40.190.10">
    <property type="entry name" value="Periplasmic binding protein-like II"/>
    <property type="match status" value="2"/>
</dbReference>
<dbReference type="HAMAP" id="MF_00079">
    <property type="entry name" value="HisG_Long"/>
    <property type="match status" value="1"/>
</dbReference>
<dbReference type="InterPro" id="IPR020621">
    <property type="entry name" value="ATP-PRT_HisG_long"/>
</dbReference>
<dbReference type="InterPro" id="IPR013820">
    <property type="entry name" value="ATP_PRibTrfase_cat"/>
</dbReference>
<dbReference type="InterPro" id="IPR001348">
    <property type="entry name" value="ATP_PRibTrfase_HisG"/>
</dbReference>
<dbReference type="InterPro" id="IPR013115">
    <property type="entry name" value="HisG_C"/>
</dbReference>
<dbReference type="InterPro" id="IPR011322">
    <property type="entry name" value="N-reg_PII-like_a/b"/>
</dbReference>
<dbReference type="InterPro" id="IPR015867">
    <property type="entry name" value="N-reg_PII/ATP_PRibTrfase_C"/>
</dbReference>
<dbReference type="NCBIfam" id="TIGR00070">
    <property type="entry name" value="hisG"/>
    <property type="match status" value="1"/>
</dbReference>
<dbReference type="NCBIfam" id="TIGR03455">
    <property type="entry name" value="HisG_C-term"/>
    <property type="match status" value="1"/>
</dbReference>
<dbReference type="PANTHER" id="PTHR21403:SF10">
    <property type="entry name" value="ATP PHOSPHORIBOSYLTRANSFERASE"/>
    <property type="match status" value="1"/>
</dbReference>
<dbReference type="PANTHER" id="PTHR21403">
    <property type="entry name" value="ATP PHOSPHORIBOSYLTRANSFERASE ATP-PRTASE"/>
    <property type="match status" value="1"/>
</dbReference>
<dbReference type="Pfam" id="PF01634">
    <property type="entry name" value="HisG"/>
    <property type="match status" value="1"/>
</dbReference>
<dbReference type="Pfam" id="PF08029">
    <property type="entry name" value="HisG_C"/>
    <property type="match status" value="1"/>
</dbReference>
<dbReference type="SUPFAM" id="SSF54913">
    <property type="entry name" value="GlnB-like"/>
    <property type="match status" value="1"/>
</dbReference>
<dbReference type="SUPFAM" id="SSF53850">
    <property type="entry name" value="Periplasmic binding protein-like II"/>
    <property type="match status" value="1"/>
</dbReference>
<reference key="1">
    <citation type="journal article" date="2008" name="Genome Res.">
        <title>The genome of Pelotomaculum thermopropionicum reveals niche-associated evolution in anaerobic microbiota.</title>
        <authorList>
            <person name="Kosaka T."/>
            <person name="Kato S."/>
            <person name="Shimoyama T."/>
            <person name="Ishii S."/>
            <person name="Abe T."/>
            <person name="Watanabe K."/>
        </authorList>
    </citation>
    <scope>NUCLEOTIDE SEQUENCE [LARGE SCALE GENOMIC DNA]</scope>
    <source>
        <strain>DSM 13744 / JCM 10971 / SI</strain>
    </source>
</reference>
<accession>A5D3N6</accession>
<comment type="function">
    <text evidence="1">Catalyzes the condensation of ATP and 5-phosphoribose 1-diphosphate to form N'-(5'-phosphoribosyl)-ATP (PR-ATP). Has a crucial role in the pathway because the rate of histidine biosynthesis seems to be controlled primarily by regulation of HisG enzymatic activity.</text>
</comment>
<comment type="catalytic activity">
    <reaction evidence="1">
        <text>1-(5-phospho-beta-D-ribosyl)-ATP + diphosphate = 5-phospho-alpha-D-ribose 1-diphosphate + ATP</text>
        <dbReference type="Rhea" id="RHEA:18473"/>
        <dbReference type="ChEBI" id="CHEBI:30616"/>
        <dbReference type="ChEBI" id="CHEBI:33019"/>
        <dbReference type="ChEBI" id="CHEBI:58017"/>
        <dbReference type="ChEBI" id="CHEBI:73183"/>
        <dbReference type="EC" id="2.4.2.17"/>
    </reaction>
</comment>
<comment type="cofactor">
    <cofactor evidence="1">
        <name>Mg(2+)</name>
        <dbReference type="ChEBI" id="CHEBI:18420"/>
    </cofactor>
</comment>
<comment type="activity regulation">
    <text evidence="1">Feedback inhibited by histidine.</text>
</comment>
<comment type="pathway">
    <text evidence="1">Amino-acid biosynthesis; L-histidine biosynthesis; L-histidine from 5-phospho-alpha-D-ribose 1-diphosphate: step 1/9.</text>
</comment>
<comment type="subcellular location">
    <subcellularLocation>
        <location evidence="1">Cytoplasm</location>
    </subcellularLocation>
</comment>
<comment type="similarity">
    <text evidence="1">Belongs to the ATP phosphoribosyltransferase family. Long subfamily.</text>
</comment>
<name>HIS1_PELTS</name>